<protein>
    <recommendedName>
        <fullName>Tail virion protein G9P</fullName>
    </recommendedName>
    <alternativeName>
        <fullName>Coat protein C, polypeptide II</fullName>
    </alternativeName>
    <alternativeName>
        <fullName>G9P</fullName>
    </alternativeName>
</protein>
<organism>
    <name type="scientific">Escherichia phage If1</name>
    <name type="common">Bacteriophage If1</name>
    <dbReference type="NCBI Taxonomy" id="10868"/>
    <lineage>
        <taxon>Viruses</taxon>
        <taxon>Monodnaviria</taxon>
        <taxon>Loebvirae</taxon>
        <taxon>Hofneiviricota</taxon>
        <taxon>Faserviricetes</taxon>
        <taxon>Tubulavirales</taxon>
        <taxon>Inoviridae</taxon>
        <taxon>Infulavirus</taxon>
        <taxon>Infulavirus If1</taxon>
    </lineage>
</organism>
<feature type="chain" id="PRO_0000098185" description="Tail virion protein G9P">
    <location>
        <begin position="1"/>
        <end position="32"/>
    </location>
</feature>
<feature type="transmembrane region" description="Helical" evidence="2">
    <location>
        <begin position="4"/>
        <end position="24"/>
    </location>
</feature>
<evidence type="ECO:0000250" key="1"/>
<evidence type="ECO:0000255" key="2"/>
<evidence type="ECO:0000305" key="3"/>
<accession>O80296</accession>
<proteinExistence type="inferred from homology"/>
<organismHost>
    <name type="scientific">Escherichia coli</name>
    <dbReference type="NCBI Taxonomy" id="562"/>
</organismHost>
<gene>
    <name type="primary">IX</name>
</gene>
<reference key="1">
    <citation type="submission" date="1993-10" db="EMBL/GenBank/DDBJ databases">
        <title>DNA sequence of the filamentous coliphage If1.</title>
        <authorList>
            <person name="Hill D.F."/>
            <person name="Hughes G."/>
            <person name="McNaughton J.C."/>
            <person name="Stockwell P.A."/>
            <person name="Petersen G.B."/>
        </authorList>
    </citation>
    <scope>NUCLEOTIDE SEQUENCE [GENOMIC DNA]</scope>
</reference>
<keyword id="KW-1043">Host membrane</keyword>
<keyword id="KW-0472">Membrane</keyword>
<keyword id="KW-1185">Reference proteome</keyword>
<keyword id="KW-0812">Transmembrane</keyword>
<keyword id="KW-1133">Transmembrane helix</keyword>
<keyword id="KW-0946">Virion</keyword>
<name>G9P_BPIF1</name>
<dbReference type="EMBL" id="U02303">
    <property type="protein sequence ID" value="AAC62153.1"/>
    <property type="molecule type" value="Genomic_DNA"/>
</dbReference>
<dbReference type="RefSeq" id="NP_047354.1">
    <property type="nucleotide sequence ID" value="NC_001954.1"/>
</dbReference>
<dbReference type="SMR" id="O80296"/>
<dbReference type="GeneID" id="1261853"/>
<dbReference type="KEGG" id="vg:1261853"/>
<dbReference type="Proteomes" id="UP000001833">
    <property type="component" value="Genome"/>
</dbReference>
<dbReference type="GO" id="GO:0033644">
    <property type="term" value="C:host cell membrane"/>
    <property type="evidence" value="ECO:0007669"/>
    <property type="project" value="UniProtKB-SubCell"/>
</dbReference>
<dbReference type="GO" id="GO:0016020">
    <property type="term" value="C:membrane"/>
    <property type="evidence" value="ECO:0007669"/>
    <property type="project" value="UniProtKB-KW"/>
</dbReference>
<dbReference type="GO" id="GO:0044423">
    <property type="term" value="C:virion component"/>
    <property type="evidence" value="ECO:0007669"/>
    <property type="project" value="UniProtKB-KW"/>
</dbReference>
<comment type="function">
    <text evidence="1">May initiate with G7P the virion concomitant assembly-budding process, by interacting with the packaging signal of the viral genome. The assembly-budding takes place at the host inner membrane. In turn, G7P and G9P are present at the end of the filamentous virion that emerges first from the bacterial host (By similarity).</text>
</comment>
<comment type="subcellular location">
    <subcellularLocation>
        <location evidence="3">Virion</location>
    </subcellularLocation>
    <subcellularLocation>
        <location evidence="3">Host membrane</location>
        <topology evidence="3">Single-pass membrane protein</topology>
    </subcellularLocation>
    <text evidence="1">Prior to assembly, is found associated with the bacterial host inner membrane. There are about five copies of this protein per mature phage that are located on the tail side of the filamentous virion with G7P (By similarity).</text>
</comment>
<comment type="similarity">
    <text evidence="3">Belongs to the inovirus G9P protein family.</text>
</comment>
<sequence length="32" mass="3599">MSALSYFFAAYCIGWVISHSILVFKKLSEVST</sequence>